<feature type="chain" id="PRO_0000422539" description="VIN3-like protein 1">
    <location>
        <begin position="1"/>
        <end position="602"/>
    </location>
</feature>
<feature type="domain" description="Fibronectin type-III" evidence="2">
    <location>
        <begin position="242"/>
        <end position="340"/>
    </location>
</feature>
<feature type="zinc finger region" description="PHD-type">
    <location>
        <begin position="67"/>
        <end position="137"/>
    </location>
</feature>
<feature type="region of interest" description="Disordered" evidence="3">
    <location>
        <begin position="1"/>
        <end position="38"/>
    </location>
</feature>
<feature type="region of interest" description="Disordered" evidence="3">
    <location>
        <begin position="430"/>
        <end position="470"/>
    </location>
</feature>
<feature type="region of interest" description="VIN3-Interacting Domain (VID)">
    <location>
        <begin position="502"/>
        <end position="602"/>
    </location>
</feature>
<feature type="short sequence motif" description="Nuclear localization signal" evidence="1">
    <location>
        <begin position="144"/>
        <end position="151"/>
    </location>
</feature>
<feature type="compositionally biased region" description="Basic residues" evidence="3">
    <location>
        <begin position="9"/>
        <end position="22"/>
    </location>
</feature>
<gene>
    <name type="primary">VIL1</name>
    <name type="synonym">VRN5</name>
    <name type="ordered locus">At3g24440</name>
    <name type="ORF">MXP5.1</name>
</gene>
<dbReference type="EMBL" id="EF064791">
    <property type="protein sequence ID" value="ABL01538.1"/>
    <property type="molecule type" value="mRNA"/>
</dbReference>
<dbReference type="EMBL" id="AP002048">
    <property type="protein sequence ID" value="BAB01947.1"/>
    <property type="molecule type" value="Genomic_DNA"/>
</dbReference>
<dbReference type="EMBL" id="CP002686">
    <property type="protein sequence ID" value="AEE76898.1"/>
    <property type="molecule type" value="Genomic_DNA"/>
</dbReference>
<dbReference type="RefSeq" id="NP_189087.1">
    <property type="nucleotide sequence ID" value="NM_113351.3"/>
</dbReference>
<dbReference type="SMR" id="Q9LHF5"/>
<dbReference type="BioGRID" id="7366">
    <property type="interactions" value="4"/>
</dbReference>
<dbReference type="DIP" id="DIP-48608N"/>
<dbReference type="FunCoup" id="Q9LHF5">
    <property type="interactions" value="1823"/>
</dbReference>
<dbReference type="IntAct" id="Q9LHF5">
    <property type="interactions" value="6"/>
</dbReference>
<dbReference type="STRING" id="3702.Q9LHF5"/>
<dbReference type="iPTMnet" id="Q9LHF5"/>
<dbReference type="PaxDb" id="3702-AT3G24440.1"/>
<dbReference type="ProteomicsDB" id="228533"/>
<dbReference type="EnsemblPlants" id="AT3G24440.1">
    <property type="protein sequence ID" value="AT3G24440.1"/>
    <property type="gene ID" value="AT3G24440"/>
</dbReference>
<dbReference type="GeneID" id="822034"/>
<dbReference type="Gramene" id="AT3G24440.1">
    <property type="protein sequence ID" value="AT3G24440.1"/>
    <property type="gene ID" value="AT3G24440"/>
</dbReference>
<dbReference type="KEGG" id="ath:AT3G24440"/>
<dbReference type="Araport" id="AT3G24440"/>
<dbReference type="TAIR" id="AT3G24440">
    <property type="gene designation" value="VRN5"/>
</dbReference>
<dbReference type="eggNOG" id="ENOG502QSVB">
    <property type="taxonomic scope" value="Eukaryota"/>
</dbReference>
<dbReference type="HOGENOM" id="CLU_016873_1_0_1"/>
<dbReference type="InParanoid" id="Q9LHF5"/>
<dbReference type="PhylomeDB" id="Q9LHF5"/>
<dbReference type="PRO" id="PR:Q9LHF5"/>
<dbReference type="Proteomes" id="UP000006548">
    <property type="component" value="Chromosome 3"/>
</dbReference>
<dbReference type="ExpressionAtlas" id="Q9LHF5">
    <property type="expression patterns" value="baseline and differential"/>
</dbReference>
<dbReference type="GO" id="GO:0005677">
    <property type="term" value="C:chromatin silencing complex"/>
    <property type="evidence" value="ECO:0000314"/>
    <property type="project" value="UniProtKB"/>
</dbReference>
<dbReference type="GO" id="GO:0016607">
    <property type="term" value="C:nuclear speck"/>
    <property type="evidence" value="ECO:0000314"/>
    <property type="project" value="UniProtKB"/>
</dbReference>
<dbReference type="GO" id="GO:0005634">
    <property type="term" value="C:nucleus"/>
    <property type="evidence" value="ECO:0000314"/>
    <property type="project" value="UniProtKB"/>
</dbReference>
<dbReference type="GO" id="GO:0008270">
    <property type="term" value="F:zinc ion binding"/>
    <property type="evidence" value="ECO:0007669"/>
    <property type="project" value="UniProtKB-KW"/>
</dbReference>
<dbReference type="GO" id="GO:0009908">
    <property type="term" value="P:flower development"/>
    <property type="evidence" value="ECO:0007669"/>
    <property type="project" value="UniProtKB-KW"/>
</dbReference>
<dbReference type="GO" id="GO:0045814">
    <property type="term" value="P:negative regulation of gene expression, epigenetic"/>
    <property type="evidence" value="ECO:0000315"/>
    <property type="project" value="UniProtKB"/>
</dbReference>
<dbReference type="GO" id="GO:0009409">
    <property type="term" value="P:response to cold"/>
    <property type="evidence" value="ECO:0000270"/>
    <property type="project" value="UniProtKB"/>
</dbReference>
<dbReference type="GO" id="GO:0048572">
    <property type="term" value="P:short-day photoperiodism"/>
    <property type="evidence" value="ECO:0000315"/>
    <property type="project" value="UniProtKB"/>
</dbReference>
<dbReference type="GO" id="GO:0048575">
    <property type="term" value="P:short-day photoperiodism, flowering"/>
    <property type="evidence" value="ECO:0000315"/>
    <property type="project" value="UniProtKB"/>
</dbReference>
<dbReference type="GO" id="GO:0010048">
    <property type="term" value="P:vernalization response"/>
    <property type="evidence" value="ECO:0000315"/>
    <property type="project" value="UniProtKB"/>
</dbReference>
<dbReference type="CDD" id="cd00063">
    <property type="entry name" value="FN3"/>
    <property type="match status" value="1"/>
</dbReference>
<dbReference type="CDD" id="cd15521">
    <property type="entry name" value="PHD_VIN3_plant"/>
    <property type="match status" value="1"/>
</dbReference>
<dbReference type="Gene3D" id="2.60.40.10">
    <property type="entry name" value="Immunoglobulins"/>
    <property type="match status" value="1"/>
</dbReference>
<dbReference type="InterPro" id="IPR003961">
    <property type="entry name" value="FN3_dom"/>
</dbReference>
<dbReference type="InterPro" id="IPR036116">
    <property type="entry name" value="FN3_sf"/>
</dbReference>
<dbReference type="InterPro" id="IPR013783">
    <property type="entry name" value="Ig-like_fold"/>
</dbReference>
<dbReference type="InterPro" id="IPR032881">
    <property type="entry name" value="Oberon-like_PHD"/>
</dbReference>
<dbReference type="InterPro" id="IPR044514">
    <property type="entry name" value="VIN3-like"/>
</dbReference>
<dbReference type="InterPro" id="IPR056990">
    <property type="entry name" value="VIN3-like_C"/>
</dbReference>
<dbReference type="PANTHER" id="PTHR46286:SF1">
    <property type="entry name" value="VIN3-LIKE PROTEIN 1"/>
    <property type="match status" value="1"/>
</dbReference>
<dbReference type="PANTHER" id="PTHR46286">
    <property type="entry name" value="VIN3-LIKE PROTEIN 2-RELATED"/>
    <property type="match status" value="1"/>
</dbReference>
<dbReference type="Pfam" id="PF00041">
    <property type="entry name" value="fn3"/>
    <property type="match status" value="1"/>
</dbReference>
<dbReference type="Pfam" id="PF07227">
    <property type="entry name" value="PHD_Oberon"/>
    <property type="match status" value="1"/>
</dbReference>
<dbReference type="Pfam" id="PF23380">
    <property type="entry name" value="VIN3_C"/>
    <property type="match status" value="1"/>
</dbReference>
<dbReference type="SUPFAM" id="SSF49265">
    <property type="entry name" value="Fibronectin type III"/>
    <property type="match status" value="1"/>
</dbReference>
<dbReference type="PROSITE" id="PS50853">
    <property type="entry name" value="FN3"/>
    <property type="match status" value="1"/>
</dbReference>
<keyword id="KW-0287">Flowering</keyword>
<keyword id="KW-0479">Metal-binding</keyword>
<keyword id="KW-0539">Nucleus</keyword>
<keyword id="KW-1185">Reference proteome</keyword>
<keyword id="KW-0678">Repressor</keyword>
<keyword id="KW-0804">Transcription</keyword>
<keyword id="KW-0805">Transcription regulation</keyword>
<keyword id="KW-0862">Zinc</keyword>
<keyword id="KW-0863">Zinc-finger</keyword>
<comment type="function">
    <text evidence="4 5 6">Involved in both the vernalization and photoperiod pathways by regulating expression of the related floral repressors FLOWERING LOCUS C (FLC) and FLOWERING LOCUS M (FLM). Together with VIN3, required during vernalization for the modifications of FLC and FLM chromatin that are associated with an epigenetically silenced state (e.g. chromatin modifications, histone deacetylation, and trimethylated H3 'Lys-4' H3K4me3 and 'Lys-27' H3K27me3) and with acquisition of competence to flower. Promotes flowering in short days (SD=8 hours light/16 hours dark). Associates dynamically at FLC locus; during vernalization, binds to specific sites, but when in warm conditions, distributed along the whole locus.</text>
</comment>
<comment type="subunit">
    <text evidence="4 5 6">Interacts with VIN3 and VIL2. The heterodimer made of VIN3 and VIL1 is required for establishing the vernalization-induced epigenetic silencing of FLC. Component of the plant homeodomain / polycomb repressive complex 2 (PHD-PRC2) large complex during prolonged cold, composed of core PRC2 components (VRN2, EZA1, FIE and MSI1), and three related PHD finger proteins (VIL1, VIL2 and VIN3) that mediates histone H3 trimethylation on 'Lys-27' (H3K27me3).</text>
</comment>
<comment type="subcellular location">
    <subcellularLocation>
        <location evidence="5">Nucleus</location>
    </subcellularLocation>
    <subcellularLocation>
        <location evidence="5">Nucleus speckle</location>
    </subcellularLocation>
    <text evidence="1">Probably DNA-associated.</text>
</comment>
<comment type="tissue specificity">
    <text evidence="5">Accumulates in shoot and root apices, and in leaves.</text>
</comment>
<comment type="induction">
    <text evidence="4">Expressed at higher levels in short days (SD=8 hours light/16 hours dark) than in long days (LD=16 hours light/8 hours dark). Slightly induced by long cold exposure (e.g. 40 days at 4 degrees Celsius).</text>
</comment>
<comment type="disruption phenotype">
    <text evidence="4 5 6">Impaired vernalization response with incomplete repression of FLC during and after cold exposure, due to a reduction in vernalization-induced histone H3 deacetylation and methylation (e.g. H3K4me3 and H3K27me3). Delayed flowering in short days (SD=8 hours light/16 hours dark) conditions but not in long days (LD=16 hours light/8 hours dark); enhanced FLM levels dur to an enhance level of chromatin acetylation.</text>
</comment>
<organism>
    <name type="scientific">Arabidopsis thaliana</name>
    <name type="common">Mouse-ear cress</name>
    <dbReference type="NCBI Taxonomy" id="3702"/>
    <lineage>
        <taxon>Eukaryota</taxon>
        <taxon>Viridiplantae</taxon>
        <taxon>Streptophyta</taxon>
        <taxon>Embryophyta</taxon>
        <taxon>Tracheophyta</taxon>
        <taxon>Spermatophyta</taxon>
        <taxon>Magnoliopsida</taxon>
        <taxon>eudicotyledons</taxon>
        <taxon>Gunneridae</taxon>
        <taxon>Pentapetalae</taxon>
        <taxon>rosids</taxon>
        <taxon>malvids</taxon>
        <taxon>Brassicales</taxon>
        <taxon>Brassicaceae</taxon>
        <taxon>Camelineae</taxon>
        <taxon>Arabidopsis</taxon>
    </lineage>
</organism>
<name>VIL1_ARATH</name>
<evidence type="ECO:0000250" key="1"/>
<evidence type="ECO:0000255" key="2">
    <source>
        <dbReference type="PROSITE-ProRule" id="PRU00316"/>
    </source>
</evidence>
<evidence type="ECO:0000256" key="3">
    <source>
        <dbReference type="SAM" id="MobiDB-lite"/>
    </source>
</evidence>
<evidence type="ECO:0000269" key="4">
    <source>
    </source>
</evidence>
<evidence type="ECO:0000269" key="5">
    <source>
    </source>
</evidence>
<evidence type="ECO:0000269" key="6">
    <source>
    </source>
</evidence>
<proteinExistence type="evidence at protein level"/>
<protein>
    <recommendedName>
        <fullName>VIN3-like protein 1</fullName>
    </recommendedName>
    <alternativeName>
        <fullName>Protein VERNALIZATION 5</fullName>
    </alternativeName>
</protein>
<accession>Q9LHF5</accession>
<reference key="1">
    <citation type="journal article" date="2006" name="Genes Dev.">
        <title>A PHD finger protein involved in both the vernalization and photoperiod pathways in Arabidopsis.</title>
        <authorList>
            <person name="Sung S."/>
            <person name="Schmitz R.J."/>
            <person name="Amasino R.M."/>
        </authorList>
    </citation>
    <scope>NUCLEOTIDE SEQUENCE [MRNA]</scope>
    <scope>FUNCTION</scope>
    <scope>DISRUPTION PHENOTYPE</scope>
    <scope>INTERACTION WITH VIN3 AND VIL2</scope>
    <scope>INDUCTION BY COLD</scope>
    <source>
        <strain>cv. Columbia</strain>
    </source>
</reference>
<reference key="2">
    <citation type="journal article" date="2000" name="DNA Res.">
        <title>Structural analysis of Arabidopsis thaliana chromosome 3. II. Sequence features of the 4,251,695 bp regions covered by 90 P1, TAC and BAC clones.</title>
        <authorList>
            <person name="Kaneko T."/>
            <person name="Katoh T."/>
            <person name="Sato S."/>
            <person name="Nakamura Y."/>
            <person name="Asamizu E."/>
            <person name="Tabata S."/>
        </authorList>
    </citation>
    <scope>NUCLEOTIDE SEQUENCE [LARGE SCALE GENOMIC DNA]</scope>
    <source>
        <strain>cv. Columbia</strain>
    </source>
</reference>
<reference key="3">
    <citation type="journal article" date="2017" name="Plant J.">
        <title>Araport11: a complete reannotation of the Arabidopsis thaliana reference genome.</title>
        <authorList>
            <person name="Cheng C.Y."/>
            <person name="Krishnakumar V."/>
            <person name="Chan A.P."/>
            <person name="Thibaud-Nissen F."/>
            <person name="Schobel S."/>
            <person name="Town C.D."/>
        </authorList>
    </citation>
    <scope>GENOME REANNOTATION</scope>
    <source>
        <strain>cv. Columbia</strain>
    </source>
</reference>
<reference key="4">
    <citation type="journal article" date="2007" name="Curr. Biol.">
        <title>The PHD finger protein VRN5 functions in the epigenetic silencing of Arabidopsis FLC.</title>
        <authorList>
            <person name="Greb T."/>
            <person name="Mylne J.S."/>
            <person name="Crevillen P."/>
            <person name="Geraldo N."/>
            <person name="An H."/>
            <person name="Gendall A.R."/>
            <person name="Dean C."/>
        </authorList>
    </citation>
    <scope>FUNCTION</scope>
    <scope>DISRUPTION PHENOTYPE</scope>
    <scope>INTERACTION WITH VIN3</scope>
    <scope>TISSUE SPECIFICITY</scope>
    <scope>SUBCELLULAR LOCATION</scope>
    <source>
        <strain>cv. Landsberg erecta</strain>
    </source>
</reference>
<reference key="5">
    <citation type="journal article" date="2008" name="Proc. Natl. Acad. Sci. U.S.A.">
        <title>A PHD-polycomb repressive complex 2 triggers the epigenetic silencing of FLC during vernalization.</title>
        <authorList>
            <person name="De Lucia F."/>
            <person name="Crevillen P."/>
            <person name="Jones A.M.E."/>
            <person name="Greb T."/>
            <person name="Dean C."/>
        </authorList>
    </citation>
    <scope>FUNCTION</scope>
    <scope>DISRUPTION PHENOTYPE</scope>
    <scope>SUBUNIT</scope>
    <scope>IDENTIFICATION BY MASS SPECTROMETRY</scope>
</reference>
<sequence length="602" mass="66851">MDSSSTKSKISHSRKTNKKSNKKHESNGKQQQQQDVDGGGGCLRSSWICKNASCRANVPKEDSFCKRCSCCVCHNFDENKDPSLWLVCEPEKSDDVEFCGLSCHIECAFREVKVGVIALGNLMKLDGCFCCYSCGKVSQILGCWKKQLVAAKEARRRDGLCYRIDLGYRLLNGTSRFSELHEIVRAAKSMLEDEVGPLDGPTARTDRGIVSRLPVAANVQELCTSAIKKAGELSANAGRDLVPAACRFHFEDIAPKQVTLRLIELPSAVEYDVKGYKLWYFKKGEMPEDDLFVDCSRTERRMVISDLEPCTEYTFRVVSYTEAGIFGHSNAMCFTKSVEILKPVDGKEKRTIDLVGNAQPSDREEKSSISSRFQIGQLGKYVQLAEAQEEGLLEAFYNVDTEKICEPPEEELPPRRPHGFDLNVVSVPDLNEEFTPPDSSGGEDNGVPLNSLAEADGGDHDDNCDDAVSNGRRKNNNDCLVISDGSGDDTGFDFLMTRKRKAISDSNDSENHECDSSSIDDTLEKCVKVIRWLEREGHIKTTFRVRFLTWFSMSSTAQEQSVVSTFVQTLEDDPGSLAGQLVDAFTDVVSTKRPNNGVMTSH</sequence>